<name>RL15_RHIE6</name>
<dbReference type="EMBL" id="CP001074">
    <property type="protein sequence ID" value="ACE90738.1"/>
    <property type="molecule type" value="Genomic_DNA"/>
</dbReference>
<dbReference type="SMR" id="B3PWU0"/>
<dbReference type="KEGG" id="rec:RHECIAT_CH0001768"/>
<dbReference type="eggNOG" id="COG0200">
    <property type="taxonomic scope" value="Bacteria"/>
</dbReference>
<dbReference type="HOGENOM" id="CLU_055188_4_0_5"/>
<dbReference type="Proteomes" id="UP000008817">
    <property type="component" value="Chromosome"/>
</dbReference>
<dbReference type="GO" id="GO:0022625">
    <property type="term" value="C:cytosolic large ribosomal subunit"/>
    <property type="evidence" value="ECO:0007669"/>
    <property type="project" value="TreeGrafter"/>
</dbReference>
<dbReference type="GO" id="GO:0019843">
    <property type="term" value="F:rRNA binding"/>
    <property type="evidence" value="ECO:0007669"/>
    <property type="project" value="UniProtKB-UniRule"/>
</dbReference>
<dbReference type="GO" id="GO:0003735">
    <property type="term" value="F:structural constituent of ribosome"/>
    <property type="evidence" value="ECO:0007669"/>
    <property type="project" value="InterPro"/>
</dbReference>
<dbReference type="GO" id="GO:0006412">
    <property type="term" value="P:translation"/>
    <property type="evidence" value="ECO:0007669"/>
    <property type="project" value="UniProtKB-UniRule"/>
</dbReference>
<dbReference type="Gene3D" id="3.100.10.10">
    <property type="match status" value="1"/>
</dbReference>
<dbReference type="HAMAP" id="MF_01341">
    <property type="entry name" value="Ribosomal_uL15"/>
    <property type="match status" value="1"/>
</dbReference>
<dbReference type="InterPro" id="IPR030878">
    <property type="entry name" value="Ribosomal_uL15"/>
</dbReference>
<dbReference type="InterPro" id="IPR021131">
    <property type="entry name" value="Ribosomal_uL15/eL18"/>
</dbReference>
<dbReference type="InterPro" id="IPR036227">
    <property type="entry name" value="Ribosomal_uL15/eL18_sf"/>
</dbReference>
<dbReference type="InterPro" id="IPR005749">
    <property type="entry name" value="Ribosomal_uL15_bac-type"/>
</dbReference>
<dbReference type="InterPro" id="IPR001196">
    <property type="entry name" value="Ribosomal_uL15_CS"/>
</dbReference>
<dbReference type="NCBIfam" id="TIGR01071">
    <property type="entry name" value="rplO_bact"/>
    <property type="match status" value="1"/>
</dbReference>
<dbReference type="PANTHER" id="PTHR12934">
    <property type="entry name" value="50S RIBOSOMAL PROTEIN L15"/>
    <property type="match status" value="1"/>
</dbReference>
<dbReference type="PANTHER" id="PTHR12934:SF11">
    <property type="entry name" value="LARGE RIBOSOMAL SUBUNIT PROTEIN UL15M"/>
    <property type="match status" value="1"/>
</dbReference>
<dbReference type="Pfam" id="PF00828">
    <property type="entry name" value="Ribosomal_L27A"/>
    <property type="match status" value="1"/>
</dbReference>
<dbReference type="SUPFAM" id="SSF52080">
    <property type="entry name" value="Ribosomal proteins L15p and L18e"/>
    <property type="match status" value="1"/>
</dbReference>
<dbReference type="PROSITE" id="PS00475">
    <property type="entry name" value="RIBOSOMAL_L15"/>
    <property type="match status" value="1"/>
</dbReference>
<feature type="chain" id="PRO_1000142868" description="Large ribosomal subunit protein uL15">
    <location>
        <begin position="1"/>
        <end position="158"/>
    </location>
</feature>
<feature type="region of interest" description="Disordered" evidence="2">
    <location>
        <begin position="1"/>
        <end position="45"/>
    </location>
</feature>
<feature type="compositionally biased region" description="Basic and acidic residues" evidence="2">
    <location>
        <begin position="1"/>
        <end position="13"/>
    </location>
</feature>
<feature type="compositionally biased region" description="Gly residues" evidence="2">
    <location>
        <begin position="21"/>
        <end position="35"/>
    </location>
</feature>
<keyword id="KW-0687">Ribonucleoprotein</keyword>
<keyword id="KW-0689">Ribosomal protein</keyword>
<keyword id="KW-0694">RNA-binding</keyword>
<keyword id="KW-0699">rRNA-binding</keyword>
<proteinExistence type="inferred from homology"/>
<gene>
    <name evidence="1" type="primary">rplO</name>
    <name type="ordered locus">RHECIAT_CH0001768</name>
</gene>
<protein>
    <recommendedName>
        <fullName evidence="1">Large ribosomal subunit protein uL15</fullName>
    </recommendedName>
    <alternativeName>
        <fullName evidence="3">50S ribosomal protein L15</fullName>
    </alternativeName>
</protein>
<comment type="function">
    <text evidence="1">Binds to the 23S rRNA.</text>
</comment>
<comment type="subunit">
    <text evidence="1">Part of the 50S ribosomal subunit.</text>
</comment>
<comment type="similarity">
    <text evidence="1">Belongs to the universal ribosomal protein uL15 family.</text>
</comment>
<evidence type="ECO:0000255" key="1">
    <source>
        <dbReference type="HAMAP-Rule" id="MF_01341"/>
    </source>
</evidence>
<evidence type="ECO:0000256" key="2">
    <source>
        <dbReference type="SAM" id="MobiDB-lite"/>
    </source>
</evidence>
<evidence type="ECO:0000305" key="3"/>
<sequence length="158" mass="16237">MKLNEIKDNEGSTHSRKRLGRGIGSGSGKTGGRGVKGQKSRSGVAINGFEGGQMPIYRRLPKRGFNNIFASDFVVVSLARIQAAIDAGKLDAKATVDAAALKAAGVIRRAKDGVRVLADGELKAKITIVVAGASKPAVEKIEKAGGSVTLLSAPAAAE</sequence>
<organism>
    <name type="scientific">Rhizobium etli (strain CIAT 652)</name>
    <dbReference type="NCBI Taxonomy" id="491916"/>
    <lineage>
        <taxon>Bacteria</taxon>
        <taxon>Pseudomonadati</taxon>
        <taxon>Pseudomonadota</taxon>
        <taxon>Alphaproteobacteria</taxon>
        <taxon>Hyphomicrobiales</taxon>
        <taxon>Rhizobiaceae</taxon>
        <taxon>Rhizobium/Agrobacterium group</taxon>
        <taxon>Rhizobium</taxon>
    </lineage>
</organism>
<reference key="1">
    <citation type="journal article" date="2010" name="Appl. Environ. Microbiol.">
        <title>Conserved symbiotic plasmid DNA sequences in the multireplicon pangenomic structure of Rhizobium etli.</title>
        <authorList>
            <person name="Gonzalez V."/>
            <person name="Acosta J.L."/>
            <person name="Santamaria R.I."/>
            <person name="Bustos P."/>
            <person name="Fernandez J.L."/>
            <person name="Hernandez Gonzalez I.L."/>
            <person name="Diaz R."/>
            <person name="Flores M."/>
            <person name="Palacios R."/>
            <person name="Mora J."/>
            <person name="Davila G."/>
        </authorList>
    </citation>
    <scope>NUCLEOTIDE SEQUENCE [LARGE SCALE GENOMIC DNA]</scope>
    <source>
        <strain>CIAT 652</strain>
    </source>
</reference>
<accession>B3PWU0</accession>